<reference key="1">
    <citation type="journal article" date="2001" name="Science">
        <title>Comparative genomics of Listeria species.</title>
        <authorList>
            <person name="Glaser P."/>
            <person name="Frangeul L."/>
            <person name="Buchrieser C."/>
            <person name="Rusniok C."/>
            <person name="Amend A."/>
            <person name="Baquero F."/>
            <person name="Berche P."/>
            <person name="Bloecker H."/>
            <person name="Brandt P."/>
            <person name="Chakraborty T."/>
            <person name="Charbit A."/>
            <person name="Chetouani F."/>
            <person name="Couve E."/>
            <person name="de Daruvar A."/>
            <person name="Dehoux P."/>
            <person name="Domann E."/>
            <person name="Dominguez-Bernal G."/>
            <person name="Duchaud E."/>
            <person name="Durant L."/>
            <person name="Dussurget O."/>
            <person name="Entian K.-D."/>
            <person name="Fsihi H."/>
            <person name="Garcia-del Portillo F."/>
            <person name="Garrido P."/>
            <person name="Gautier L."/>
            <person name="Goebel W."/>
            <person name="Gomez-Lopez N."/>
            <person name="Hain T."/>
            <person name="Hauf J."/>
            <person name="Jackson D."/>
            <person name="Jones L.-M."/>
            <person name="Kaerst U."/>
            <person name="Kreft J."/>
            <person name="Kuhn M."/>
            <person name="Kunst F."/>
            <person name="Kurapkat G."/>
            <person name="Madueno E."/>
            <person name="Maitournam A."/>
            <person name="Mata Vicente J."/>
            <person name="Ng E."/>
            <person name="Nedjari H."/>
            <person name="Nordsiek G."/>
            <person name="Novella S."/>
            <person name="de Pablos B."/>
            <person name="Perez-Diaz J.-C."/>
            <person name="Purcell R."/>
            <person name="Remmel B."/>
            <person name="Rose M."/>
            <person name="Schlueter T."/>
            <person name="Simoes N."/>
            <person name="Tierrez A."/>
            <person name="Vazquez-Boland J.-A."/>
            <person name="Voss H."/>
            <person name="Wehland J."/>
            <person name="Cossart P."/>
        </authorList>
    </citation>
    <scope>NUCLEOTIDE SEQUENCE [LARGE SCALE GENOMIC DNA]</scope>
    <source>
        <strain>ATCC BAA-679 / EGD-e</strain>
    </source>
</reference>
<feature type="chain" id="PRO_0000178189" description="dITP/XTP pyrophosphatase">
    <location>
        <begin position="1"/>
        <end position="203"/>
    </location>
</feature>
<feature type="active site" description="Proton acceptor" evidence="1">
    <location>
        <position position="70"/>
    </location>
</feature>
<feature type="binding site" evidence="1">
    <location>
        <begin position="8"/>
        <end position="13"/>
    </location>
    <ligand>
        <name>substrate</name>
    </ligand>
</feature>
<feature type="binding site" evidence="1">
    <location>
        <position position="41"/>
    </location>
    <ligand>
        <name>Mg(2+)</name>
        <dbReference type="ChEBI" id="CHEBI:18420"/>
    </ligand>
</feature>
<feature type="binding site" evidence="1">
    <location>
        <position position="70"/>
    </location>
    <ligand>
        <name>Mg(2+)</name>
        <dbReference type="ChEBI" id="CHEBI:18420"/>
    </ligand>
</feature>
<feature type="binding site" evidence="1">
    <location>
        <position position="71"/>
    </location>
    <ligand>
        <name>substrate</name>
    </ligand>
</feature>
<feature type="binding site" evidence="1">
    <location>
        <begin position="153"/>
        <end position="156"/>
    </location>
    <ligand>
        <name>substrate</name>
    </ligand>
</feature>
<feature type="binding site" evidence="1">
    <location>
        <position position="176"/>
    </location>
    <ligand>
        <name>substrate</name>
    </ligand>
</feature>
<feature type="binding site" evidence="1">
    <location>
        <begin position="181"/>
        <end position="182"/>
    </location>
    <ligand>
        <name>substrate</name>
    </ligand>
</feature>
<proteinExistence type="inferred from homology"/>
<comment type="function">
    <text evidence="1">Pyrophosphatase that catalyzes the hydrolysis of nucleoside triphosphates to their monophosphate derivatives, with a high preference for the non-canonical purine nucleotides XTP (xanthosine triphosphate), dITP (deoxyinosine triphosphate) and ITP. Seems to function as a house-cleaning enzyme that removes non-canonical purine nucleotides from the nucleotide pool, thus preventing their incorporation into DNA/RNA and avoiding chromosomal lesions.</text>
</comment>
<comment type="catalytic activity">
    <reaction evidence="1">
        <text>XTP + H2O = XMP + diphosphate + H(+)</text>
        <dbReference type="Rhea" id="RHEA:28610"/>
        <dbReference type="ChEBI" id="CHEBI:15377"/>
        <dbReference type="ChEBI" id="CHEBI:15378"/>
        <dbReference type="ChEBI" id="CHEBI:33019"/>
        <dbReference type="ChEBI" id="CHEBI:57464"/>
        <dbReference type="ChEBI" id="CHEBI:61314"/>
        <dbReference type="EC" id="3.6.1.66"/>
    </reaction>
</comment>
<comment type="catalytic activity">
    <reaction evidence="1">
        <text>dITP + H2O = dIMP + diphosphate + H(+)</text>
        <dbReference type="Rhea" id="RHEA:28342"/>
        <dbReference type="ChEBI" id="CHEBI:15377"/>
        <dbReference type="ChEBI" id="CHEBI:15378"/>
        <dbReference type="ChEBI" id="CHEBI:33019"/>
        <dbReference type="ChEBI" id="CHEBI:61194"/>
        <dbReference type="ChEBI" id="CHEBI:61382"/>
        <dbReference type="EC" id="3.6.1.66"/>
    </reaction>
</comment>
<comment type="catalytic activity">
    <reaction evidence="1">
        <text>ITP + H2O = IMP + diphosphate + H(+)</text>
        <dbReference type="Rhea" id="RHEA:29399"/>
        <dbReference type="ChEBI" id="CHEBI:15377"/>
        <dbReference type="ChEBI" id="CHEBI:15378"/>
        <dbReference type="ChEBI" id="CHEBI:33019"/>
        <dbReference type="ChEBI" id="CHEBI:58053"/>
        <dbReference type="ChEBI" id="CHEBI:61402"/>
        <dbReference type="EC" id="3.6.1.66"/>
    </reaction>
</comment>
<comment type="cofactor">
    <cofactor evidence="1">
        <name>Mg(2+)</name>
        <dbReference type="ChEBI" id="CHEBI:18420"/>
    </cofactor>
    <text evidence="1">Binds 1 Mg(2+) ion per subunit.</text>
</comment>
<comment type="subunit">
    <text evidence="1">Homodimer.</text>
</comment>
<comment type="similarity">
    <text evidence="1">Belongs to the HAM1 NTPase family.</text>
</comment>
<keyword id="KW-0378">Hydrolase</keyword>
<keyword id="KW-0460">Magnesium</keyword>
<keyword id="KW-0479">Metal-binding</keyword>
<keyword id="KW-0546">Nucleotide metabolism</keyword>
<keyword id="KW-0547">Nucleotide-binding</keyword>
<keyword id="KW-1185">Reference proteome</keyword>
<name>IXTPA_LISMO</name>
<dbReference type="EC" id="3.6.1.66" evidence="1"/>
<dbReference type="EMBL" id="AL591978">
    <property type="protein sequence ID" value="CAC99317.1"/>
    <property type="molecule type" value="Genomic_DNA"/>
</dbReference>
<dbReference type="PIR" id="AG1229">
    <property type="entry name" value="AG1229"/>
</dbReference>
<dbReference type="RefSeq" id="NP_464764.1">
    <property type="nucleotide sequence ID" value="NC_003210.1"/>
</dbReference>
<dbReference type="RefSeq" id="WP_009932644.1">
    <property type="nucleotide sequence ID" value="NZ_CP149495.1"/>
</dbReference>
<dbReference type="SMR" id="Q8Y7N5"/>
<dbReference type="STRING" id="169963.gene:17593895"/>
<dbReference type="PaxDb" id="169963-lmo1239"/>
<dbReference type="EnsemblBacteria" id="CAC99317">
    <property type="protein sequence ID" value="CAC99317"/>
    <property type="gene ID" value="CAC99317"/>
</dbReference>
<dbReference type="GeneID" id="986028"/>
<dbReference type="KEGG" id="lmo:lmo1239"/>
<dbReference type="PATRIC" id="fig|169963.11.peg.1271"/>
<dbReference type="eggNOG" id="COG0127">
    <property type="taxonomic scope" value="Bacteria"/>
</dbReference>
<dbReference type="HOGENOM" id="CLU_082080_0_2_9"/>
<dbReference type="OrthoDB" id="9807456at2"/>
<dbReference type="PhylomeDB" id="Q8Y7N5"/>
<dbReference type="BioCyc" id="LMON169963:LMO1239-MONOMER"/>
<dbReference type="Proteomes" id="UP000000817">
    <property type="component" value="Chromosome"/>
</dbReference>
<dbReference type="GO" id="GO:0005737">
    <property type="term" value="C:cytoplasm"/>
    <property type="evidence" value="ECO:0000318"/>
    <property type="project" value="GO_Central"/>
</dbReference>
<dbReference type="GO" id="GO:0005829">
    <property type="term" value="C:cytosol"/>
    <property type="evidence" value="ECO:0000318"/>
    <property type="project" value="GO_Central"/>
</dbReference>
<dbReference type="GO" id="GO:0035870">
    <property type="term" value="F:dITP diphosphatase activity"/>
    <property type="evidence" value="ECO:0007669"/>
    <property type="project" value="RHEA"/>
</dbReference>
<dbReference type="GO" id="GO:0036220">
    <property type="term" value="F:ITP diphosphatase activity"/>
    <property type="evidence" value="ECO:0007669"/>
    <property type="project" value="UniProtKB-EC"/>
</dbReference>
<dbReference type="GO" id="GO:0046872">
    <property type="term" value="F:metal ion binding"/>
    <property type="evidence" value="ECO:0007669"/>
    <property type="project" value="UniProtKB-KW"/>
</dbReference>
<dbReference type="GO" id="GO:0047429">
    <property type="term" value="F:nucleoside triphosphate diphosphatase activity"/>
    <property type="evidence" value="ECO:0000318"/>
    <property type="project" value="GO_Central"/>
</dbReference>
<dbReference type="GO" id="GO:0000166">
    <property type="term" value="F:nucleotide binding"/>
    <property type="evidence" value="ECO:0007669"/>
    <property type="project" value="UniProtKB-KW"/>
</dbReference>
<dbReference type="GO" id="GO:0017111">
    <property type="term" value="F:ribonucleoside triphosphate phosphatase activity"/>
    <property type="evidence" value="ECO:0007669"/>
    <property type="project" value="InterPro"/>
</dbReference>
<dbReference type="GO" id="GO:0036222">
    <property type="term" value="F:XTP diphosphatase activity"/>
    <property type="evidence" value="ECO:0007669"/>
    <property type="project" value="RHEA"/>
</dbReference>
<dbReference type="GO" id="GO:0009143">
    <property type="term" value="P:nucleoside triphosphate catabolic process"/>
    <property type="evidence" value="ECO:0000318"/>
    <property type="project" value="GO_Central"/>
</dbReference>
<dbReference type="GO" id="GO:0009117">
    <property type="term" value="P:nucleotide metabolic process"/>
    <property type="evidence" value="ECO:0007669"/>
    <property type="project" value="UniProtKB-KW"/>
</dbReference>
<dbReference type="GO" id="GO:0009146">
    <property type="term" value="P:purine nucleoside triphosphate catabolic process"/>
    <property type="evidence" value="ECO:0007669"/>
    <property type="project" value="UniProtKB-UniRule"/>
</dbReference>
<dbReference type="CDD" id="cd00515">
    <property type="entry name" value="HAM1"/>
    <property type="match status" value="1"/>
</dbReference>
<dbReference type="FunFam" id="3.90.950.10:FF:000001">
    <property type="entry name" value="dITP/XTP pyrophosphatase"/>
    <property type="match status" value="1"/>
</dbReference>
<dbReference type="Gene3D" id="3.90.950.10">
    <property type="match status" value="1"/>
</dbReference>
<dbReference type="HAMAP" id="MF_01405">
    <property type="entry name" value="Non_canon_purine_NTPase"/>
    <property type="match status" value="1"/>
</dbReference>
<dbReference type="InterPro" id="IPR020922">
    <property type="entry name" value="dITP/XTP_pyrophosphatase"/>
</dbReference>
<dbReference type="InterPro" id="IPR029001">
    <property type="entry name" value="ITPase-like_fam"/>
</dbReference>
<dbReference type="InterPro" id="IPR002637">
    <property type="entry name" value="RdgB/HAM1"/>
</dbReference>
<dbReference type="NCBIfam" id="NF011397">
    <property type="entry name" value="PRK14822.1"/>
    <property type="match status" value="1"/>
</dbReference>
<dbReference type="NCBIfam" id="TIGR00042">
    <property type="entry name" value="RdgB/HAM1 family non-canonical purine NTP pyrophosphatase"/>
    <property type="match status" value="1"/>
</dbReference>
<dbReference type="PANTHER" id="PTHR11067:SF9">
    <property type="entry name" value="INOSINE TRIPHOSPHATE PYROPHOSPHATASE"/>
    <property type="match status" value="1"/>
</dbReference>
<dbReference type="PANTHER" id="PTHR11067">
    <property type="entry name" value="INOSINE TRIPHOSPHATE PYROPHOSPHATASE/HAM1 PROTEIN"/>
    <property type="match status" value="1"/>
</dbReference>
<dbReference type="Pfam" id="PF01725">
    <property type="entry name" value="Ham1p_like"/>
    <property type="match status" value="1"/>
</dbReference>
<dbReference type="SUPFAM" id="SSF52972">
    <property type="entry name" value="ITPase-like"/>
    <property type="match status" value="1"/>
</dbReference>
<organism>
    <name type="scientific">Listeria monocytogenes serovar 1/2a (strain ATCC BAA-679 / EGD-e)</name>
    <dbReference type="NCBI Taxonomy" id="169963"/>
    <lineage>
        <taxon>Bacteria</taxon>
        <taxon>Bacillati</taxon>
        <taxon>Bacillota</taxon>
        <taxon>Bacilli</taxon>
        <taxon>Bacillales</taxon>
        <taxon>Listeriaceae</taxon>
        <taxon>Listeria</taxon>
    </lineage>
</organism>
<sequence length="203" mass="21984">MSKIIIATANKGKAKEFEKIFAKFNIEVATLADFPEIGEIEETGTTFAENAALKAETVASVLNQTVIADDSGLIVDALDGAPGVYSARYAGVAHDDAKNNEKLLKNLEGVEPDKRTARFHCTLAVATPSEKTSFYTGEVEGVIAEQLCGTNGFGYDPLFFLPEFGLTMAEIPAEKKNEISHRANAIKQLEKDLVEVVEKVTKK</sequence>
<gene>
    <name type="ordered locus">lmo1239</name>
</gene>
<accession>Q8Y7N5</accession>
<evidence type="ECO:0000255" key="1">
    <source>
        <dbReference type="HAMAP-Rule" id="MF_01405"/>
    </source>
</evidence>
<protein>
    <recommendedName>
        <fullName evidence="1">dITP/XTP pyrophosphatase</fullName>
        <ecNumber evidence="1">3.6.1.66</ecNumber>
    </recommendedName>
    <alternativeName>
        <fullName evidence="1">Non-canonical purine NTP pyrophosphatase</fullName>
    </alternativeName>
    <alternativeName>
        <fullName evidence="1">Non-standard purine NTP pyrophosphatase</fullName>
    </alternativeName>
    <alternativeName>
        <fullName evidence="1">Nucleoside-triphosphate diphosphatase</fullName>
    </alternativeName>
    <alternativeName>
        <fullName evidence="1">Nucleoside-triphosphate pyrophosphatase</fullName>
        <shortName evidence="1">NTPase</shortName>
    </alternativeName>
</protein>